<comment type="function">
    <text evidence="1">Catalyzes the synthesis of GMP from XMP.</text>
</comment>
<comment type="catalytic activity">
    <reaction evidence="1">
        <text>XMP + L-glutamine + ATP + H2O = GMP + L-glutamate + AMP + diphosphate + 2 H(+)</text>
        <dbReference type="Rhea" id="RHEA:11680"/>
        <dbReference type="ChEBI" id="CHEBI:15377"/>
        <dbReference type="ChEBI" id="CHEBI:15378"/>
        <dbReference type="ChEBI" id="CHEBI:29985"/>
        <dbReference type="ChEBI" id="CHEBI:30616"/>
        <dbReference type="ChEBI" id="CHEBI:33019"/>
        <dbReference type="ChEBI" id="CHEBI:57464"/>
        <dbReference type="ChEBI" id="CHEBI:58115"/>
        <dbReference type="ChEBI" id="CHEBI:58359"/>
        <dbReference type="ChEBI" id="CHEBI:456215"/>
        <dbReference type="EC" id="6.3.5.2"/>
    </reaction>
</comment>
<comment type="pathway">
    <text evidence="1">Purine metabolism; GMP biosynthesis; GMP from XMP (L-Gln route): step 1/1.</text>
</comment>
<comment type="subunit">
    <text evidence="1">Homodimer.</text>
</comment>
<feature type="chain" id="PRO_0000140166" description="GMP synthase [glutamine-hydrolyzing]">
    <location>
        <begin position="1"/>
        <end position="520"/>
    </location>
</feature>
<feature type="domain" description="Glutamine amidotransferase type-1" evidence="1">
    <location>
        <begin position="9"/>
        <end position="202"/>
    </location>
</feature>
<feature type="domain" description="GMPS ATP-PPase" evidence="1">
    <location>
        <begin position="203"/>
        <end position="395"/>
    </location>
</feature>
<feature type="active site" description="Nucleophile" evidence="1">
    <location>
        <position position="86"/>
    </location>
</feature>
<feature type="active site" evidence="1">
    <location>
        <position position="176"/>
    </location>
</feature>
<feature type="active site" evidence="1">
    <location>
        <position position="178"/>
    </location>
</feature>
<feature type="binding site" evidence="1">
    <location>
        <begin position="230"/>
        <end position="236"/>
    </location>
    <ligand>
        <name>ATP</name>
        <dbReference type="ChEBI" id="CHEBI:30616"/>
    </ligand>
</feature>
<evidence type="ECO:0000255" key="1">
    <source>
        <dbReference type="HAMAP-Rule" id="MF_00344"/>
    </source>
</evidence>
<sequence length="520" mass="56978">MKTANHPDTVLIVDFGSQFTQLIARRIREAGVFSEIVPFQSAEAAFKRINPKAVILSGGPASTSDIGSPRAPQIVFDAGVPVLGICYGQMAMCVQMGGVAESSNHREFGRAFVEIEKDSPLFEGLWATGQRHQVWMSHGDRVIALPPGFQVFGKSESSPFAIFGNVERKMYGIMFHPEVVHTPDGARLLRNFVHNIAGIEGDWTMRAYREHAVEAIRKQVGKGKVICALSGGVDSSVAALLIHEAVGDQLTCILVDHGLMRKDEAAGVVAMFRQHYNLPLILVDASEKFISALEGEVDPEKKRKTIGRLFIEVFEEEAKKLGGADFLAQGTLYPDVIESVSFTGGPSVTIKSHHNVGGLPERMNMQLVEPLRELFKDEVRALGKELGLPESFIGRHPFPGPGLAIRCPGGITREKLEILREADAIYLDEIRKAGLYDAIWQAFAVLLPVQTVGVMGDGRTYEFVCALRAVTSVDGMTADFYHYDMAFLGAAATRIINEVRGINRVVYDVTSKPPGTIEWE</sequence>
<reference key="1">
    <citation type="journal article" date="2000" name="DNA Res.">
        <title>Complete genome structure of the nitrogen-fixing symbiotic bacterium Mesorhizobium loti.</title>
        <authorList>
            <person name="Kaneko T."/>
            <person name="Nakamura Y."/>
            <person name="Sato S."/>
            <person name="Asamizu E."/>
            <person name="Kato T."/>
            <person name="Sasamoto S."/>
            <person name="Watanabe A."/>
            <person name="Idesawa K."/>
            <person name="Ishikawa A."/>
            <person name="Kawashima K."/>
            <person name="Kimura T."/>
            <person name="Kishida Y."/>
            <person name="Kiyokawa C."/>
            <person name="Kohara M."/>
            <person name="Matsumoto M."/>
            <person name="Matsuno A."/>
            <person name="Mochizuki Y."/>
            <person name="Nakayama S."/>
            <person name="Nakazaki N."/>
            <person name="Shimpo S."/>
            <person name="Sugimoto M."/>
            <person name="Takeuchi C."/>
            <person name="Yamada M."/>
            <person name="Tabata S."/>
        </authorList>
    </citation>
    <scope>NUCLEOTIDE SEQUENCE [LARGE SCALE GENOMIC DNA]</scope>
    <source>
        <strain>LMG 29417 / CECT 9101 / MAFF 303099</strain>
    </source>
</reference>
<dbReference type="EC" id="6.3.5.2" evidence="1"/>
<dbReference type="EMBL" id="BA000012">
    <property type="protein sequence ID" value="BAB53137.1"/>
    <property type="molecule type" value="Genomic_DNA"/>
</dbReference>
<dbReference type="RefSeq" id="WP_010914447.1">
    <property type="nucleotide sequence ID" value="NC_002678.2"/>
</dbReference>
<dbReference type="SMR" id="Q987R3"/>
<dbReference type="KEGG" id="mlo:mlr6950"/>
<dbReference type="eggNOG" id="COG0518">
    <property type="taxonomic scope" value="Bacteria"/>
</dbReference>
<dbReference type="eggNOG" id="COG0519">
    <property type="taxonomic scope" value="Bacteria"/>
</dbReference>
<dbReference type="HOGENOM" id="CLU_014340_0_5_5"/>
<dbReference type="UniPathway" id="UPA00189">
    <property type="reaction ID" value="UER00296"/>
</dbReference>
<dbReference type="Proteomes" id="UP000000552">
    <property type="component" value="Chromosome"/>
</dbReference>
<dbReference type="GO" id="GO:0005829">
    <property type="term" value="C:cytosol"/>
    <property type="evidence" value="ECO:0007669"/>
    <property type="project" value="TreeGrafter"/>
</dbReference>
<dbReference type="GO" id="GO:0005524">
    <property type="term" value="F:ATP binding"/>
    <property type="evidence" value="ECO:0007669"/>
    <property type="project" value="UniProtKB-UniRule"/>
</dbReference>
<dbReference type="GO" id="GO:0003921">
    <property type="term" value="F:GMP synthase activity"/>
    <property type="evidence" value="ECO:0007669"/>
    <property type="project" value="InterPro"/>
</dbReference>
<dbReference type="CDD" id="cd01742">
    <property type="entry name" value="GATase1_GMP_Synthase"/>
    <property type="match status" value="1"/>
</dbReference>
<dbReference type="CDD" id="cd01997">
    <property type="entry name" value="GMP_synthase_C"/>
    <property type="match status" value="1"/>
</dbReference>
<dbReference type="FunFam" id="3.30.300.10:FF:000002">
    <property type="entry name" value="GMP synthase [glutamine-hydrolyzing]"/>
    <property type="match status" value="1"/>
</dbReference>
<dbReference type="FunFam" id="3.40.50.620:FF:000001">
    <property type="entry name" value="GMP synthase [glutamine-hydrolyzing]"/>
    <property type="match status" value="1"/>
</dbReference>
<dbReference type="FunFam" id="3.40.50.880:FF:000001">
    <property type="entry name" value="GMP synthase [glutamine-hydrolyzing]"/>
    <property type="match status" value="1"/>
</dbReference>
<dbReference type="Gene3D" id="3.30.300.10">
    <property type="match status" value="1"/>
</dbReference>
<dbReference type="Gene3D" id="3.40.50.880">
    <property type="match status" value="1"/>
</dbReference>
<dbReference type="Gene3D" id="3.40.50.620">
    <property type="entry name" value="HUPs"/>
    <property type="match status" value="1"/>
</dbReference>
<dbReference type="HAMAP" id="MF_00344">
    <property type="entry name" value="GMP_synthase"/>
    <property type="match status" value="1"/>
</dbReference>
<dbReference type="InterPro" id="IPR029062">
    <property type="entry name" value="Class_I_gatase-like"/>
</dbReference>
<dbReference type="InterPro" id="IPR017926">
    <property type="entry name" value="GATASE"/>
</dbReference>
<dbReference type="InterPro" id="IPR001674">
    <property type="entry name" value="GMP_synth_C"/>
</dbReference>
<dbReference type="InterPro" id="IPR004739">
    <property type="entry name" value="GMP_synth_GATase"/>
</dbReference>
<dbReference type="InterPro" id="IPR022955">
    <property type="entry name" value="GMP_synthase"/>
</dbReference>
<dbReference type="InterPro" id="IPR025777">
    <property type="entry name" value="GMPS_ATP_PPase_dom"/>
</dbReference>
<dbReference type="InterPro" id="IPR014729">
    <property type="entry name" value="Rossmann-like_a/b/a_fold"/>
</dbReference>
<dbReference type="NCBIfam" id="TIGR00884">
    <property type="entry name" value="guaA_Cterm"/>
    <property type="match status" value="1"/>
</dbReference>
<dbReference type="NCBIfam" id="TIGR00888">
    <property type="entry name" value="guaA_Nterm"/>
    <property type="match status" value="1"/>
</dbReference>
<dbReference type="NCBIfam" id="NF000848">
    <property type="entry name" value="PRK00074.1"/>
    <property type="match status" value="1"/>
</dbReference>
<dbReference type="PANTHER" id="PTHR11922:SF2">
    <property type="entry name" value="GMP SYNTHASE [GLUTAMINE-HYDROLYZING]"/>
    <property type="match status" value="1"/>
</dbReference>
<dbReference type="PANTHER" id="PTHR11922">
    <property type="entry name" value="GMP SYNTHASE-RELATED"/>
    <property type="match status" value="1"/>
</dbReference>
<dbReference type="Pfam" id="PF00117">
    <property type="entry name" value="GATase"/>
    <property type="match status" value="1"/>
</dbReference>
<dbReference type="Pfam" id="PF00958">
    <property type="entry name" value="GMP_synt_C"/>
    <property type="match status" value="1"/>
</dbReference>
<dbReference type="Pfam" id="PF03054">
    <property type="entry name" value="tRNA_Me_trans"/>
    <property type="match status" value="1"/>
</dbReference>
<dbReference type="PRINTS" id="PR00097">
    <property type="entry name" value="ANTSNTHASEII"/>
</dbReference>
<dbReference type="PRINTS" id="PR00096">
    <property type="entry name" value="GATASE"/>
</dbReference>
<dbReference type="SUPFAM" id="SSF52402">
    <property type="entry name" value="Adenine nucleotide alpha hydrolases-like"/>
    <property type="match status" value="1"/>
</dbReference>
<dbReference type="SUPFAM" id="SSF52317">
    <property type="entry name" value="Class I glutamine amidotransferase-like"/>
    <property type="match status" value="1"/>
</dbReference>
<dbReference type="SUPFAM" id="SSF54810">
    <property type="entry name" value="GMP synthetase C-terminal dimerisation domain"/>
    <property type="match status" value="1"/>
</dbReference>
<dbReference type="PROSITE" id="PS51273">
    <property type="entry name" value="GATASE_TYPE_1"/>
    <property type="match status" value="1"/>
</dbReference>
<dbReference type="PROSITE" id="PS51553">
    <property type="entry name" value="GMPS_ATP_PPASE"/>
    <property type="match status" value="1"/>
</dbReference>
<name>GUAA_RHILO</name>
<proteinExistence type="inferred from homology"/>
<accession>Q987R3</accession>
<gene>
    <name evidence="1" type="primary">guaA</name>
    <name type="ordered locus">mlr6950</name>
</gene>
<keyword id="KW-0067">ATP-binding</keyword>
<keyword id="KW-0315">Glutamine amidotransferase</keyword>
<keyword id="KW-0332">GMP biosynthesis</keyword>
<keyword id="KW-0436">Ligase</keyword>
<keyword id="KW-0547">Nucleotide-binding</keyword>
<keyword id="KW-0658">Purine biosynthesis</keyword>
<organism>
    <name type="scientific">Mesorhizobium japonicum (strain LMG 29417 / CECT 9101 / MAFF 303099)</name>
    <name type="common">Mesorhizobium loti (strain MAFF 303099)</name>
    <dbReference type="NCBI Taxonomy" id="266835"/>
    <lineage>
        <taxon>Bacteria</taxon>
        <taxon>Pseudomonadati</taxon>
        <taxon>Pseudomonadota</taxon>
        <taxon>Alphaproteobacteria</taxon>
        <taxon>Hyphomicrobiales</taxon>
        <taxon>Phyllobacteriaceae</taxon>
        <taxon>Mesorhizobium</taxon>
    </lineage>
</organism>
<protein>
    <recommendedName>
        <fullName evidence="1">GMP synthase [glutamine-hydrolyzing]</fullName>
        <ecNumber evidence="1">6.3.5.2</ecNumber>
    </recommendedName>
    <alternativeName>
        <fullName evidence="1">GMP synthetase</fullName>
    </alternativeName>
    <alternativeName>
        <fullName evidence="1">Glutamine amidotransferase</fullName>
    </alternativeName>
</protein>